<comment type="PTM">
    <text>Binds 1 heme c group covalently per subunit.</text>
</comment>
<sequence length="155" mass="16398">MKISIYATLAAITLALPAAAQDGDAAKGEKEFNKCKACHMIQAPDGTDIIKGGKTGPNLYGVVGRKIASEEGFKYGEGILEVAEKNPDLTWTEADLIEYVTDPKPWLVKMTDDKGAKTKMTFKMGKNQADVVAFLAQNSPDAGGDGEAAAEGESN</sequence>
<proteinExistence type="evidence at protein level"/>
<name>CY550_PARDE</name>
<dbReference type="EMBL" id="Y07533">
    <property type="protein sequence ID" value="CAA68820.1"/>
    <property type="molecule type" value="Genomic_DNA"/>
</dbReference>
<dbReference type="EMBL" id="M27304">
    <property type="protein sequence ID" value="AAA88364.1"/>
    <property type="molecule type" value="Genomic_DNA"/>
</dbReference>
<dbReference type="PIR" id="S08269">
    <property type="entry name" value="CCPC50"/>
</dbReference>
<dbReference type="RefSeq" id="WP_011748227.1">
    <property type="nucleotide sequence ID" value="NZ_PPGA01000019.1"/>
</dbReference>
<dbReference type="PDB" id="155C">
    <property type="method" value="X-ray"/>
    <property type="resolution" value="2.50 A"/>
    <property type="chains" value="A=23-142"/>
</dbReference>
<dbReference type="PDB" id="1COT">
    <property type="method" value="X-ray"/>
    <property type="resolution" value="1.70 A"/>
    <property type="chains" value="A=21-149"/>
</dbReference>
<dbReference type="PDBsum" id="155C"/>
<dbReference type="PDBsum" id="1COT"/>
<dbReference type="SMR" id="P00096"/>
<dbReference type="TCDB" id="3.D.4.6.1">
    <property type="family name" value="the proton-translocating cytochrome oxidase (cox) superfamily"/>
</dbReference>
<dbReference type="OMA" id="MEAGMEW"/>
<dbReference type="EvolutionaryTrace" id="P00096"/>
<dbReference type="GO" id="GO:0009055">
    <property type="term" value="F:electron transfer activity"/>
    <property type="evidence" value="ECO:0007669"/>
    <property type="project" value="InterPro"/>
</dbReference>
<dbReference type="GO" id="GO:0020037">
    <property type="term" value="F:heme binding"/>
    <property type="evidence" value="ECO:0007669"/>
    <property type="project" value="InterPro"/>
</dbReference>
<dbReference type="GO" id="GO:0046872">
    <property type="term" value="F:metal ion binding"/>
    <property type="evidence" value="ECO:0007669"/>
    <property type="project" value="UniProtKB-KW"/>
</dbReference>
<dbReference type="Gene3D" id="1.10.760.10">
    <property type="entry name" value="Cytochrome c-like domain"/>
    <property type="match status" value="1"/>
</dbReference>
<dbReference type="InterPro" id="IPR009056">
    <property type="entry name" value="Cyt_c-like_dom"/>
</dbReference>
<dbReference type="InterPro" id="IPR036909">
    <property type="entry name" value="Cyt_c-like_dom_sf"/>
</dbReference>
<dbReference type="InterPro" id="IPR002327">
    <property type="entry name" value="Cyt_c_1A/1B"/>
</dbReference>
<dbReference type="PANTHER" id="PTHR11961">
    <property type="entry name" value="CYTOCHROME C"/>
    <property type="match status" value="1"/>
</dbReference>
<dbReference type="SUPFAM" id="SSF46626">
    <property type="entry name" value="Cytochrome c"/>
    <property type="match status" value="1"/>
</dbReference>
<dbReference type="PROSITE" id="PS51007">
    <property type="entry name" value="CYTC"/>
    <property type="match status" value="1"/>
</dbReference>
<keyword id="KW-0002">3D-structure</keyword>
<keyword id="KW-0903">Direct protein sequencing</keyword>
<keyword id="KW-0249">Electron transport</keyword>
<keyword id="KW-0349">Heme</keyword>
<keyword id="KW-0408">Iron</keyword>
<keyword id="KW-0479">Metal-binding</keyword>
<keyword id="KW-0873">Pyrrolidone carboxylic acid</keyword>
<keyword id="KW-0732">Signal</keyword>
<keyword id="KW-0813">Transport</keyword>
<organism>
    <name type="scientific">Paracoccus denitrificans</name>
    <dbReference type="NCBI Taxonomy" id="266"/>
    <lineage>
        <taxon>Bacteria</taxon>
        <taxon>Pseudomonadati</taxon>
        <taxon>Pseudomonadota</taxon>
        <taxon>Alphaproteobacteria</taxon>
        <taxon>Rhodobacterales</taxon>
        <taxon>Paracoccaceae</taxon>
        <taxon>Paracoccus</taxon>
    </lineage>
</organism>
<gene>
    <name type="primary">cycA</name>
</gene>
<accession>P00096</accession>
<feature type="signal peptide" evidence="3">
    <location>
        <begin position="1"/>
        <end position="20"/>
    </location>
</feature>
<feature type="chain" id="PRO_0000006523" description="Cytochrome c-550">
    <location>
        <begin position="21"/>
        <end position="149"/>
    </location>
</feature>
<feature type="propeptide" id="PRO_0000006524">
    <location>
        <begin position="150"/>
        <end position="155"/>
    </location>
</feature>
<feature type="binding site" description="covalent" evidence="1 2">
    <location>
        <position position="35"/>
    </location>
    <ligand>
        <name>heme c</name>
        <dbReference type="ChEBI" id="CHEBI:61717"/>
    </ligand>
</feature>
<feature type="binding site" description="covalent" evidence="1 2">
    <location>
        <position position="38"/>
    </location>
    <ligand>
        <name>heme c</name>
        <dbReference type="ChEBI" id="CHEBI:61717"/>
    </ligand>
</feature>
<feature type="binding site" description="axial binding residue" evidence="1 2">
    <location>
        <position position="39"/>
    </location>
    <ligand>
        <name>heme c</name>
        <dbReference type="ChEBI" id="CHEBI:61717"/>
    </ligand>
    <ligandPart>
        <name>Fe</name>
        <dbReference type="ChEBI" id="CHEBI:18248"/>
    </ligandPart>
</feature>
<feature type="binding site" description="axial binding residue" evidence="1 2">
    <location>
        <position position="120"/>
    </location>
    <ligand>
        <name>heme c</name>
        <dbReference type="ChEBI" id="CHEBI:61717"/>
    </ligand>
    <ligandPart>
        <name>Fe</name>
        <dbReference type="ChEBI" id="CHEBI:18248"/>
    </ligandPart>
</feature>
<feature type="modified residue" description="Pyrrolidone carboxylic acid" evidence="3">
    <location>
        <position position="21"/>
    </location>
</feature>
<feature type="sequence variant" description="In 50% of the molecules.">
    <location>
        <position position="149"/>
    </location>
</feature>
<feature type="helix" evidence="5">
    <location>
        <begin position="25"/>
        <end position="31"/>
    </location>
</feature>
<feature type="helix" evidence="5">
    <location>
        <begin position="32"/>
        <end position="34"/>
    </location>
</feature>
<feature type="turn" evidence="5">
    <location>
        <begin position="35"/>
        <end position="38"/>
    </location>
</feature>
<feature type="strand" evidence="4">
    <location>
        <begin position="44"/>
        <end position="46"/>
    </location>
</feature>
<feature type="strand" evidence="5">
    <location>
        <begin position="48"/>
        <end position="50"/>
    </location>
</feature>
<feature type="strand" evidence="5">
    <location>
        <begin position="54"/>
        <end position="56"/>
    </location>
</feature>
<feature type="strand" evidence="4">
    <location>
        <begin position="70"/>
        <end position="73"/>
    </location>
</feature>
<feature type="helix" evidence="5">
    <location>
        <begin position="77"/>
        <end position="85"/>
    </location>
</feature>
<feature type="helix" evidence="5">
    <location>
        <begin position="93"/>
        <end position="101"/>
    </location>
</feature>
<feature type="helix" evidence="5">
    <location>
        <begin position="103"/>
        <end position="111"/>
    </location>
</feature>
<feature type="helix" evidence="5">
    <location>
        <begin position="128"/>
        <end position="137"/>
    </location>
</feature>
<reference key="1">
    <citation type="journal article" date="1990" name="FEBS Lett.">
        <title>Are there isoenzymes of cytochrome c oxidase in Paracoccus denitrificans?</title>
        <authorList>
            <person name="Raitio M."/>
            <person name="Pispa J.M."/>
            <person name="Metso T."/>
            <person name="Saraste M."/>
        </authorList>
    </citation>
    <scope>NUCLEOTIDE SEQUENCE [GENOMIC DNA]</scope>
    <source>
        <strain>Pd 1222</strain>
    </source>
</reference>
<reference key="2">
    <citation type="journal article" date="1990" name="J. Bacteriol.">
        <title>Mutagenesis of the gene encoding cytochrome c550 of Paracoccus denitrificans and analysis of the resultant physiological effects.</title>
        <authorList>
            <person name="van Spanning R.J.M."/>
            <person name="Wansell C."/>
            <person name="Harms N."/>
            <person name="Oltmann L.F."/>
            <person name="Stouthamer A.H."/>
        </authorList>
    </citation>
    <scope>NUCLEOTIDE SEQUENCE [GENOMIC DNA]</scope>
    <source>
        <strain>Pd 1222</strain>
    </source>
</reference>
<reference key="3">
    <citation type="journal article" date="1990" name="J. Bacteriol.">
        <authorList>
            <person name="van Spanning R.J.M."/>
            <person name="Wansell C."/>
            <person name="Harms N."/>
            <person name="Oltmann L.F."/>
            <person name="Stouthamer A.H."/>
        </authorList>
    </citation>
    <scope>ERRATUM OF PUBMED:2153663</scope>
</reference>
<reference key="4">
    <citation type="journal article" date="1981" name="J. Mol. Biol.">
        <title>A reassessment of the structure of Paracoccus cytochrome c-550.</title>
        <authorList>
            <person name="Ambler R.P."/>
            <person name="Meyer T.E."/>
            <person name="Kamen M.D."/>
            <person name="Schichman S.A."/>
            <person name="Sawyer L."/>
        </authorList>
    </citation>
    <scope>PROTEIN SEQUENCE OF 21-149</scope>
    <scope>PYROGLUTAMATE FORMATION AT GLN-21</scope>
    <source>
        <strain>ATCC 13543 / NRRL B-3784 / NRC 449</strain>
    </source>
</reference>
<reference key="5">
    <citation type="journal article" date="1976" name="J. Biol. Chem.">
        <title>The structure of Paracoccus denitrificans cytochrome c550.</title>
        <authorList>
            <person name="Timkovich R."/>
            <person name="Dickerson R.E."/>
        </authorList>
    </citation>
    <scope>X-RAY CRYSTALLOGRAPHY (2.45 ANGSTROMS)</scope>
</reference>
<reference key="6">
    <citation type="journal article" date="1994" name="Arch. Biochem. Biophys.">
        <title>X-ray structure of the cytochrome c2 isolated from Paracoccus denitrificans refined to 1.7-A resolution.</title>
        <authorList>
            <person name="Benning M.M."/>
            <person name="Meyer T.E."/>
            <person name="Holden H.M."/>
        </authorList>
    </citation>
    <scope>X-RAY CRYSTALLOGRAPHY (1.7 ANGSTROMS)</scope>
</reference>
<protein>
    <recommendedName>
        <fullName>Cytochrome c-550</fullName>
    </recommendedName>
    <alternativeName>
        <fullName>Cytochrome C2</fullName>
    </alternativeName>
    <alternativeName>
        <fullName>Cytochrome c550</fullName>
    </alternativeName>
</protein>
<evidence type="ECO:0000255" key="1">
    <source>
        <dbReference type="PROSITE-ProRule" id="PRU00433"/>
    </source>
</evidence>
<evidence type="ECO:0000269" key="2">
    <source>
    </source>
</evidence>
<evidence type="ECO:0000269" key="3">
    <source>
    </source>
</evidence>
<evidence type="ECO:0007829" key="4">
    <source>
        <dbReference type="PDB" id="155C"/>
    </source>
</evidence>
<evidence type="ECO:0007829" key="5">
    <source>
        <dbReference type="PDB" id="1COT"/>
    </source>
</evidence>